<dbReference type="EMBL" id="CP001657">
    <property type="protein sequence ID" value="ACT11321.1"/>
    <property type="molecule type" value="Genomic_DNA"/>
</dbReference>
<dbReference type="RefSeq" id="WP_012772985.1">
    <property type="nucleotide sequence ID" value="NC_012917.1"/>
</dbReference>
<dbReference type="STRING" id="561230.PC1_0262"/>
<dbReference type="KEGG" id="pct:PC1_0262"/>
<dbReference type="eggNOG" id="ENOG5032YJX">
    <property type="taxonomic scope" value="Bacteria"/>
</dbReference>
<dbReference type="HOGENOM" id="CLU_188292_0_0_6"/>
<dbReference type="Proteomes" id="UP000002736">
    <property type="component" value="Chromosome"/>
</dbReference>
<dbReference type="GO" id="GO:0005886">
    <property type="term" value="C:plasma membrane"/>
    <property type="evidence" value="ECO:0007669"/>
    <property type="project" value="UniProtKB-SubCell"/>
</dbReference>
<dbReference type="HAMAP" id="MF_01546">
    <property type="entry name" value="AaeX"/>
    <property type="match status" value="1"/>
</dbReference>
<dbReference type="InterPro" id="IPR012451">
    <property type="entry name" value="DUF1656"/>
</dbReference>
<dbReference type="NCBIfam" id="NF008615">
    <property type="entry name" value="PRK11594.1"/>
    <property type="match status" value="1"/>
</dbReference>
<dbReference type="Pfam" id="PF07869">
    <property type="entry name" value="DUF1656"/>
    <property type="match status" value="1"/>
</dbReference>
<reference key="1">
    <citation type="submission" date="2009-07" db="EMBL/GenBank/DDBJ databases">
        <title>Complete sequence of Pectobacterium carotovorum subsp. carotovorum PC1.</title>
        <authorList>
            <consortium name="US DOE Joint Genome Institute"/>
            <person name="Lucas S."/>
            <person name="Copeland A."/>
            <person name="Lapidus A."/>
            <person name="Glavina del Rio T."/>
            <person name="Tice H."/>
            <person name="Bruce D."/>
            <person name="Goodwin L."/>
            <person name="Pitluck S."/>
            <person name="Munk A.C."/>
            <person name="Brettin T."/>
            <person name="Detter J.C."/>
            <person name="Han C."/>
            <person name="Tapia R."/>
            <person name="Larimer F."/>
            <person name="Land M."/>
            <person name="Hauser L."/>
            <person name="Kyrpides N."/>
            <person name="Mikhailova N."/>
            <person name="Balakrishnan V."/>
            <person name="Glasner J."/>
            <person name="Perna N.T."/>
        </authorList>
    </citation>
    <scope>NUCLEOTIDE SEQUENCE [LARGE SCALE GENOMIC DNA]</scope>
    <source>
        <strain>PC1</strain>
    </source>
</reference>
<evidence type="ECO:0000255" key="1">
    <source>
        <dbReference type="HAMAP-Rule" id="MF_01546"/>
    </source>
</evidence>
<sequence>MSSLPVMVLFGLSFPPVFFVLLVSLTLFFVVNCLLQPTGIYDFVWHPALFNSALFCCLFYLLFRYGL</sequence>
<keyword id="KW-1003">Cell membrane</keyword>
<keyword id="KW-0472">Membrane</keyword>
<keyword id="KW-0812">Transmembrane</keyword>
<keyword id="KW-1133">Transmembrane helix</keyword>
<name>AAEX_PECCP</name>
<protein>
    <recommendedName>
        <fullName evidence="1">Protein AaeX</fullName>
    </recommendedName>
</protein>
<organism>
    <name type="scientific">Pectobacterium carotovorum subsp. carotovorum (strain PC1)</name>
    <dbReference type="NCBI Taxonomy" id="561230"/>
    <lineage>
        <taxon>Bacteria</taxon>
        <taxon>Pseudomonadati</taxon>
        <taxon>Pseudomonadota</taxon>
        <taxon>Gammaproteobacteria</taxon>
        <taxon>Enterobacterales</taxon>
        <taxon>Pectobacteriaceae</taxon>
        <taxon>Pectobacterium</taxon>
    </lineage>
</organism>
<accession>C6DIM1</accession>
<comment type="subcellular location">
    <subcellularLocation>
        <location evidence="1">Cell membrane</location>
        <topology evidence="1">Multi-pass membrane protein</topology>
    </subcellularLocation>
</comment>
<comment type="similarity">
    <text evidence="1">Belongs to the AaeX family.</text>
</comment>
<gene>
    <name evidence="1" type="primary">aaeX</name>
    <name type="ordered locus">PC1_0262</name>
</gene>
<feature type="chain" id="PRO_1000215445" description="Protein AaeX">
    <location>
        <begin position="1"/>
        <end position="67"/>
    </location>
</feature>
<feature type="transmembrane region" description="Helical" evidence="1">
    <location>
        <begin position="10"/>
        <end position="30"/>
    </location>
</feature>
<feature type="transmembrane region" description="Helical" evidence="1">
    <location>
        <begin position="43"/>
        <end position="63"/>
    </location>
</feature>
<proteinExistence type="inferred from homology"/>